<dbReference type="EC" id="4.1.3.30" evidence="3 4"/>
<dbReference type="EMBL" id="U51879">
    <property type="protein sequence ID" value="AAC44814.1"/>
    <property type="molecule type" value="Genomic_DNA"/>
</dbReference>
<dbReference type="EMBL" id="AE006468">
    <property type="protein sequence ID" value="AAL19322.1"/>
    <property type="molecule type" value="Genomic_DNA"/>
</dbReference>
<dbReference type="RefSeq" id="NP_459363.1">
    <property type="nucleotide sequence ID" value="NC_003197.2"/>
</dbReference>
<dbReference type="RefSeq" id="WP_000052224.1">
    <property type="nucleotide sequence ID" value="NC_003197.2"/>
</dbReference>
<dbReference type="PDB" id="1O5Q">
    <property type="method" value="X-ray"/>
    <property type="resolution" value="2.30 A"/>
    <property type="chains" value="A/B/C/D=2-295"/>
</dbReference>
<dbReference type="PDB" id="1UJQ">
    <property type="method" value="X-ray"/>
    <property type="resolution" value="2.10 A"/>
    <property type="chains" value="A/B/C/D=2-295"/>
</dbReference>
<dbReference type="PDBsum" id="1O5Q"/>
<dbReference type="PDBsum" id="1UJQ"/>
<dbReference type="SMR" id="Q56062"/>
<dbReference type="STRING" id="99287.STM0368"/>
<dbReference type="PaxDb" id="99287-STM0368"/>
<dbReference type="GeneID" id="1251887"/>
<dbReference type="KEGG" id="stm:STM0368"/>
<dbReference type="PATRIC" id="fig|99287.12.peg.390"/>
<dbReference type="HOGENOM" id="CLU_027389_3_2_6"/>
<dbReference type="OMA" id="DRIGYHA"/>
<dbReference type="PhylomeDB" id="Q56062"/>
<dbReference type="BioCyc" id="MetaCyc:MONOMER-66"/>
<dbReference type="BioCyc" id="SENT99287:STM0368-MONOMER"/>
<dbReference type="UniPathway" id="UPA00946"/>
<dbReference type="EvolutionaryTrace" id="Q56062"/>
<dbReference type="Proteomes" id="UP000001014">
    <property type="component" value="Chromosome"/>
</dbReference>
<dbReference type="GO" id="GO:0000287">
    <property type="term" value="F:magnesium ion binding"/>
    <property type="evidence" value="ECO:0000314"/>
    <property type="project" value="UniProtKB"/>
</dbReference>
<dbReference type="GO" id="GO:0046421">
    <property type="term" value="F:methylisocitrate lyase activity"/>
    <property type="evidence" value="ECO:0000314"/>
    <property type="project" value="UniProtKB"/>
</dbReference>
<dbReference type="GO" id="GO:0140677">
    <property type="term" value="F:molecular function activator activity"/>
    <property type="evidence" value="ECO:0000269"/>
    <property type="project" value="DisProt"/>
</dbReference>
<dbReference type="GO" id="GO:0019629">
    <property type="term" value="P:propionate catabolic process, 2-methylcitrate cycle"/>
    <property type="evidence" value="ECO:0000314"/>
    <property type="project" value="UniProtKB"/>
</dbReference>
<dbReference type="CDD" id="cd00377">
    <property type="entry name" value="ICL_PEPM"/>
    <property type="match status" value="1"/>
</dbReference>
<dbReference type="FunFam" id="3.20.20.60:FF:000009">
    <property type="entry name" value="2-methylisocitrate lyase"/>
    <property type="match status" value="1"/>
</dbReference>
<dbReference type="Gene3D" id="3.20.20.60">
    <property type="entry name" value="Phosphoenolpyruvate-binding domains"/>
    <property type="match status" value="1"/>
</dbReference>
<dbReference type="HAMAP" id="MF_01939">
    <property type="entry name" value="PrpB"/>
    <property type="match status" value="1"/>
</dbReference>
<dbReference type="InterPro" id="IPR039556">
    <property type="entry name" value="ICL/PEPM"/>
</dbReference>
<dbReference type="InterPro" id="IPR018523">
    <property type="entry name" value="Isocitrate_lyase_ph_CS"/>
</dbReference>
<dbReference type="InterPro" id="IPR012695">
    <property type="entry name" value="PrpB"/>
</dbReference>
<dbReference type="InterPro" id="IPR015813">
    <property type="entry name" value="Pyrv/PenolPyrv_kinase-like_dom"/>
</dbReference>
<dbReference type="InterPro" id="IPR040442">
    <property type="entry name" value="Pyrv_kinase-like_dom_sf"/>
</dbReference>
<dbReference type="NCBIfam" id="NF008455">
    <property type="entry name" value="PRK11320.1"/>
    <property type="match status" value="1"/>
</dbReference>
<dbReference type="NCBIfam" id="TIGR02317">
    <property type="entry name" value="prpB"/>
    <property type="match status" value="1"/>
</dbReference>
<dbReference type="PANTHER" id="PTHR42905:SF5">
    <property type="entry name" value="CARBOXYVINYL-CARBOXYPHOSPHONATE PHOSPHORYLMUTASE, CHLOROPLASTIC"/>
    <property type="match status" value="1"/>
</dbReference>
<dbReference type="PANTHER" id="PTHR42905">
    <property type="entry name" value="PHOSPHOENOLPYRUVATE CARBOXYLASE"/>
    <property type="match status" value="1"/>
</dbReference>
<dbReference type="Pfam" id="PF13714">
    <property type="entry name" value="PEP_mutase"/>
    <property type="match status" value="1"/>
</dbReference>
<dbReference type="SUPFAM" id="SSF51621">
    <property type="entry name" value="Phosphoenolpyruvate/pyruvate domain"/>
    <property type="match status" value="1"/>
</dbReference>
<dbReference type="PROSITE" id="PS00161">
    <property type="entry name" value="ISOCITRATE_LYASE"/>
    <property type="match status" value="1"/>
</dbReference>
<accession>Q56062</accession>
<evidence type="ECO:0000255" key="1">
    <source>
        <dbReference type="HAMAP-Rule" id="MF_01939"/>
    </source>
</evidence>
<evidence type="ECO:0000269" key="2">
    <source>
    </source>
</evidence>
<evidence type="ECO:0000269" key="3">
    <source>
    </source>
</evidence>
<evidence type="ECO:0000269" key="4">
    <source>
    </source>
</evidence>
<evidence type="ECO:0000269" key="5">
    <source>
    </source>
</evidence>
<evidence type="ECO:0000303" key="6">
    <source>
    </source>
</evidence>
<evidence type="ECO:0000303" key="7">
    <source>
    </source>
</evidence>
<evidence type="ECO:0000305" key="8"/>
<evidence type="ECO:0000305" key="9">
    <source>
    </source>
</evidence>
<evidence type="ECO:0007829" key="10">
    <source>
        <dbReference type="PDB" id="1O5Q"/>
    </source>
</evidence>
<evidence type="ECO:0007829" key="11">
    <source>
        <dbReference type="PDB" id="1UJQ"/>
    </source>
</evidence>
<protein>
    <recommendedName>
        <fullName evidence="6">2-methylisocitrate lyase</fullName>
        <shortName evidence="7">2-MIC</shortName>
        <shortName evidence="7">MICL</shortName>
        <ecNumber evidence="3 4">4.1.3.30</ecNumber>
    </recommendedName>
    <alternativeName>
        <fullName evidence="1">(2R,3S)-2-methylisocitrate lyase</fullName>
    </alternativeName>
</protein>
<keyword id="KW-0002">3D-structure</keyword>
<keyword id="KW-0456">Lyase</keyword>
<keyword id="KW-0460">Magnesium</keyword>
<keyword id="KW-0479">Metal-binding</keyword>
<keyword id="KW-1185">Reference proteome</keyword>
<comment type="function">
    <text evidence="1 2 3 4">Involved in the catabolism of short chain fatty acids (SCFA) via the 2-methylcitrate cycle I (propionate degradation route). Catalyzes the thermodynamically favored C-C bond cleavage of (2R,3S)-2-methylisocitrate to yield pyruvate and succinate via an alpha-carboxy-carbanion intermediate.</text>
</comment>
<comment type="catalytic activity">
    <reaction evidence="1 3 4">
        <text>(2S,3R)-3-hydroxybutane-1,2,3-tricarboxylate = pyruvate + succinate</text>
        <dbReference type="Rhea" id="RHEA:16809"/>
        <dbReference type="ChEBI" id="CHEBI:15361"/>
        <dbReference type="ChEBI" id="CHEBI:30031"/>
        <dbReference type="ChEBI" id="CHEBI:57429"/>
        <dbReference type="EC" id="4.1.3.30"/>
    </reaction>
</comment>
<comment type="cofactor">
    <cofactor evidence="1 4 5">
        <name>Mg(2+)</name>
        <dbReference type="ChEBI" id="CHEBI:18420"/>
    </cofactor>
</comment>
<comment type="biophysicochemical properties">
    <kinetics>
        <KM evidence="4">18 uM for 2-methylisocitrate</KM>
        <text evidence="4">kcat is 74 sec(-1) for 2-methylisocitrate lyase with 2-methylisocitrate as substrate.</text>
    </kinetics>
    <phDependence>
        <text evidence="4">Optimum pH is 7.5.</text>
    </phDependence>
    <temperatureDependence>
        <text evidence="4">Optimum temperature is 50 degrees Celsius.</text>
    </temperatureDependence>
</comment>
<comment type="pathway">
    <text evidence="1 9">Organic acid metabolism; propanoate degradation.</text>
</comment>
<comment type="subunit">
    <text evidence="1 4 5">Homotetramer; dimer of dimers.</text>
</comment>
<comment type="disruption phenotype">
    <text evidence="2">Cells lacking this gene are unable to accumulate 2-methylcitrate and 2-methyl-cis-aconitate.</text>
</comment>
<comment type="miscellaneous">
    <text evidence="4">In vitro, dithiothreitol (DTT) or reduced glutathione (GSH) are required for optimal activity.</text>
</comment>
<comment type="similarity">
    <text evidence="1">Belongs to the isocitrate lyase/PEP mutase superfamily. Methylisocitrate lyase family.</text>
</comment>
<name>PRPB_SALTY</name>
<reference key="1">
    <citation type="journal article" date="1997" name="J. Bacteriol.">
        <title>Propionate catabolism in Salmonella typhimurium LT2: two divergently transcribed units comprise the prp locus at 8.5 centisomes, prpR encodes a member of the sigma-54 family of activators, and the prpBCDE genes constitute an operon.</title>
        <authorList>
            <person name="Horswill A.R."/>
            <person name="Escalante-Semerena J.C."/>
        </authorList>
    </citation>
    <scope>NUCLEOTIDE SEQUENCE [GENOMIC DNA]</scope>
    <source>
        <strain>LT2 / SGSC1412 / ATCC 700720</strain>
    </source>
</reference>
<reference key="2">
    <citation type="journal article" date="2001" name="Nature">
        <title>Complete genome sequence of Salmonella enterica serovar Typhimurium LT2.</title>
        <authorList>
            <person name="McClelland M."/>
            <person name="Sanderson K.E."/>
            <person name="Spieth J."/>
            <person name="Clifton S.W."/>
            <person name="Latreille P."/>
            <person name="Courtney L."/>
            <person name="Porwollik S."/>
            <person name="Ali J."/>
            <person name="Dante M."/>
            <person name="Du F."/>
            <person name="Hou S."/>
            <person name="Layman D."/>
            <person name="Leonard S."/>
            <person name="Nguyen C."/>
            <person name="Scott K."/>
            <person name="Holmes A."/>
            <person name="Grewal N."/>
            <person name="Mulvaney E."/>
            <person name="Ryan E."/>
            <person name="Sun H."/>
            <person name="Florea L."/>
            <person name="Miller W."/>
            <person name="Stoneking T."/>
            <person name="Nhan M."/>
            <person name="Waterston R."/>
            <person name="Wilson R.K."/>
        </authorList>
    </citation>
    <scope>NUCLEOTIDE SEQUENCE [LARGE SCALE GENOMIC DNA]</scope>
    <source>
        <strain>LT2 / SGSC1412 / ATCC 700720</strain>
    </source>
</reference>
<reference key="3">
    <citation type="journal article" date="1999" name="J. Bacteriol.">
        <title>Salmonella typhimurium LT2 catabolizes propionate via the 2-methylcitric acid cycle.</title>
        <authorList>
            <person name="Horswill A.R."/>
            <person name="Escalante-Semerena J.C."/>
        </authorList>
    </citation>
    <scope>FUNCTION</scope>
    <scope>DISRUPTION PHENOTYPE</scope>
</reference>
<reference key="4">
    <citation type="journal article" date="2001" name="Biochemistry">
        <title>In vitro conversion of propionate to pyruvate by Salmonella enterica enzymes: 2-methylcitrate dehydratase (PrpD) and aconitase enzymes catalyze the conversion of 2-methylcitrate to 2-methylisocitrate.</title>
        <authorList>
            <person name="Horswill A.R."/>
            <person name="Escalante-Semerena J.C."/>
        </authorList>
    </citation>
    <scope>FUNCTION</scope>
    <scope>CATALYTIC ACTIVITY</scope>
</reference>
<reference key="5">
    <citation type="journal article" date="2003" name="J. Bacteriol.">
        <title>Residues C123 and D58 of the 2-methylisocitrate lyase (PrpB) enzyme of Salmonella enterica are essential for catalysis.</title>
        <authorList>
            <person name="Grimek T.L."/>
            <person name="Holden H."/>
            <person name="Rayment I."/>
            <person name="Escalante-Semerena J.C."/>
        </authorList>
    </citation>
    <scope>FUNCTION</scope>
    <scope>CATALYTIC ACTIVITY</scope>
    <scope>BIOPHYSICOCHEMICAL PROPERTIES</scope>
    <scope>MUTAGENESIS OF ASP-58; LYS-121; ARG-122; CYS-123 AND HIS-125</scope>
    <scope>COFACTOR</scope>
    <scope>SUBUNIT</scope>
    <source>
        <strain>LT2 / SGSC1412 / ATCC 700720</strain>
    </source>
</reference>
<reference key="6">
    <citation type="journal article" date="2003" name="Biochem. Biophys. Res. Commun.">
        <title>Crystal structure of Salmonella typhimurium 2-methylisocitrate lyase (PrpB) and its complex with pyruvate and Mg(2+).</title>
        <authorList>
            <person name="Simanshu D.K."/>
            <person name="Satheshkumar P.S."/>
            <person name="Savithri H.S."/>
            <person name="Murthy M.R."/>
        </authorList>
    </citation>
    <scope>X-RAY CRYSTALLOGRAPHY (2.1 ANGSTROMS) IN COMPLEX WITH SUBSTRATE AND MAGNESIUM</scope>
    <scope>COFACTOR</scope>
    <scope>SUBUNIT</scope>
</reference>
<gene>
    <name evidence="6" type="primary">prpB</name>
    <name type="ordered locus">STM0368</name>
</gene>
<sequence length="295" mass="32000">MSLHSPGQAFRAALAKENPLQIVGAINANHALLAQRAGYQAIYLSGGGVAAGSLGLPDLGISTLDDVLTDIRRITDVCPLPLLVDADIGFGSSAFNVARTVKSIAKAGAAALHIEDQVGAKRCGHRPNKAIVSKEEMVDRIRAAVDARTDPNFVIMARTDALAVEGLEAALDRAQAYVDAGADMLFPEAITELSMYRRFADVAQVPILANITEFGATPLFTTDELRSAHVAMALYPLSAFRAMNRAAEKVYTVLRQEGTQKNVIDIMQTRNELYESINYYQFEEKLDALYRNKKS</sequence>
<organism>
    <name type="scientific">Salmonella typhimurium (strain LT2 / SGSC1412 / ATCC 700720)</name>
    <dbReference type="NCBI Taxonomy" id="99287"/>
    <lineage>
        <taxon>Bacteria</taxon>
        <taxon>Pseudomonadati</taxon>
        <taxon>Pseudomonadota</taxon>
        <taxon>Gammaproteobacteria</taxon>
        <taxon>Enterobacterales</taxon>
        <taxon>Enterobacteriaceae</taxon>
        <taxon>Salmonella</taxon>
    </lineage>
</organism>
<proteinExistence type="evidence at protein level"/>
<feature type="initiator methionine" description="Removed" evidence="8">
    <location>
        <position position="1"/>
    </location>
</feature>
<feature type="chain" id="PRO_0000068816" description="2-methylisocitrate lyase">
    <location>
        <begin position="2"/>
        <end position="295"/>
    </location>
</feature>
<feature type="binding site" evidence="5">
    <location>
        <begin position="45"/>
        <end position="47"/>
    </location>
    <ligand>
        <name>substrate</name>
    </ligand>
</feature>
<feature type="binding site" evidence="5">
    <location>
        <position position="85"/>
    </location>
    <ligand>
        <name>Mg(2+)</name>
        <dbReference type="ChEBI" id="CHEBI:18420"/>
    </ligand>
</feature>
<feature type="binding site" evidence="1">
    <location>
        <position position="87"/>
    </location>
    <ligand>
        <name>Mg(2+)</name>
        <dbReference type="ChEBI" id="CHEBI:18420"/>
    </ligand>
</feature>
<feature type="binding site" evidence="1">
    <location>
        <begin position="123"/>
        <end position="124"/>
    </location>
    <ligand>
        <name>substrate</name>
    </ligand>
</feature>
<feature type="binding site" evidence="5">
    <location>
        <position position="158"/>
    </location>
    <ligand>
        <name>substrate</name>
    </ligand>
</feature>
<feature type="binding site" evidence="1">
    <location>
        <position position="188"/>
    </location>
    <ligand>
        <name>substrate</name>
    </ligand>
</feature>
<feature type="binding site" evidence="1">
    <location>
        <begin position="210"/>
        <end position="212"/>
    </location>
    <ligand>
        <name>substrate</name>
    </ligand>
</feature>
<feature type="binding site" evidence="1">
    <location>
        <position position="241"/>
    </location>
    <ligand>
        <name>substrate</name>
    </ligand>
</feature>
<feature type="binding site" evidence="1">
    <location>
        <position position="270"/>
    </location>
    <ligand>
        <name>substrate</name>
    </ligand>
</feature>
<feature type="mutagenesis site" description="Inactive. Retains the same oligomeric state of the wild-type." evidence="4">
    <original>D</original>
    <variation>A</variation>
    <location>
        <position position="58"/>
    </location>
</feature>
<feature type="mutagenesis site" description="1000-fold decrease in the catalytic efficiency. Retains the same oligomeric state of the wild-type." evidence="4">
    <original>K</original>
    <variation>A</variation>
    <location>
        <position position="121"/>
    </location>
</feature>
<feature type="mutagenesis site" description="2-fold decrease in the catalytic efficiency. Retains the same oligomeric state of the wild-type." evidence="4">
    <original>R</original>
    <variation>K</variation>
    <location>
        <position position="122"/>
    </location>
</feature>
<feature type="mutagenesis site" description="Inactive. Retains the same oligomeric state of the wild-type." evidence="4">
    <original>C</original>
    <variation>A</variation>
    <location>
        <position position="123"/>
    </location>
</feature>
<feature type="mutagenesis site" description="750-fold decrease in the catalytic efficiency. Retains the same oligomeric state of the wild-type." evidence="4">
    <original>H</original>
    <variation>A</variation>
    <location>
        <position position="125"/>
    </location>
</feature>
<feature type="helix" evidence="11">
    <location>
        <begin position="6"/>
        <end position="16"/>
    </location>
</feature>
<feature type="strand" evidence="11">
    <location>
        <begin position="17"/>
        <end position="24"/>
    </location>
</feature>
<feature type="helix" evidence="11">
    <location>
        <begin position="28"/>
        <end position="37"/>
    </location>
</feature>
<feature type="strand" evidence="11">
    <location>
        <begin position="40"/>
        <end position="44"/>
    </location>
</feature>
<feature type="helix" evidence="11">
    <location>
        <begin position="46"/>
        <end position="51"/>
    </location>
</feature>
<feature type="strand" evidence="11">
    <location>
        <begin position="58"/>
        <end position="60"/>
    </location>
</feature>
<feature type="helix" evidence="11">
    <location>
        <begin position="64"/>
        <end position="77"/>
    </location>
</feature>
<feature type="strand" evidence="11">
    <location>
        <begin position="82"/>
        <end position="85"/>
    </location>
</feature>
<feature type="strand" evidence="11">
    <location>
        <begin position="90"/>
        <end position="93"/>
    </location>
</feature>
<feature type="helix" evidence="11">
    <location>
        <begin position="94"/>
        <end position="106"/>
    </location>
</feature>
<feature type="strand" evidence="11">
    <location>
        <begin position="110"/>
        <end position="115"/>
    </location>
</feature>
<feature type="helix" evidence="11">
    <location>
        <begin position="134"/>
        <end position="147"/>
    </location>
</feature>
<feature type="strand" evidence="11">
    <location>
        <begin position="153"/>
        <end position="159"/>
    </location>
</feature>
<feature type="helix" evidence="11">
    <location>
        <begin position="161"/>
        <end position="165"/>
    </location>
</feature>
<feature type="helix" evidence="11">
    <location>
        <begin position="167"/>
        <end position="179"/>
    </location>
</feature>
<feature type="strand" evidence="11">
    <location>
        <begin position="183"/>
        <end position="187"/>
    </location>
</feature>
<feature type="helix" evidence="11">
    <location>
        <begin position="193"/>
        <end position="203"/>
    </location>
</feature>
<feature type="strand" evidence="11">
    <location>
        <begin position="207"/>
        <end position="210"/>
    </location>
</feature>
<feature type="strand" evidence="11">
    <location>
        <begin position="213"/>
        <end position="217"/>
    </location>
</feature>
<feature type="helix" evidence="11">
    <location>
        <begin position="222"/>
        <end position="227"/>
    </location>
</feature>
<feature type="strand" evidence="11">
    <location>
        <begin position="232"/>
        <end position="237"/>
    </location>
</feature>
<feature type="helix" evidence="11">
    <location>
        <begin position="238"/>
        <end position="257"/>
    </location>
</feature>
<feature type="strand" evidence="10">
    <location>
        <begin position="258"/>
        <end position="260"/>
    </location>
</feature>
<feature type="helix" evidence="11">
    <location>
        <begin position="261"/>
        <end position="266"/>
    </location>
</feature>
<feature type="helix" evidence="11">
    <location>
        <begin position="270"/>
        <end position="276"/>
    </location>
</feature>
<feature type="helix" evidence="11">
    <location>
        <begin position="279"/>
        <end position="285"/>
    </location>
</feature>